<gene>
    <name evidence="1" type="primary">tusA</name>
    <name type="ordered locus">PSPA7_3766</name>
</gene>
<accession>A6V7T5</accession>
<evidence type="ECO:0000255" key="1">
    <source>
        <dbReference type="HAMAP-Rule" id="MF_00413"/>
    </source>
</evidence>
<dbReference type="EMBL" id="CP000744">
    <property type="protein sequence ID" value="ABR81162.1"/>
    <property type="molecule type" value="Genomic_DNA"/>
</dbReference>
<dbReference type="RefSeq" id="WP_003157379.1">
    <property type="nucleotide sequence ID" value="NC_009656.1"/>
</dbReference>
<dbReference type="SMR" id="A6V7T5"/>
<dbReference type="GeneID" id="77221817"/>
<dbReference type="KEGG" id="pap:PSPA7_3766"/>
<dbReference type="HOGENOM" id="CLU_165255_5_1_6"/>
<dbReference type="Proteomes" id="UP000001582">
    <property type="component" value="Chromosome"/>
</dbReference>
<dbReference type="GO" id="GO:0005737">
    <property type="term" value="C:cytoplasm"/>
    <property type="evidence" value="ECO:0007669"/>
    <property type="project" value="UniProtKB-SubCell"/>
</dbReference>
<dbReference type="GO" id="GO:0097163">
    <property type="term" value="F:sulfur carrier activity"/>
    <property type="evidence" value="ECO:0007669"/>
    <property type="project" value="UniProtKB-UniRule"/>
</dbReference>
<dbReference type="GO" id="GO:0002143">
    <property type="term" value="P:tRNA wobble position uridine thiolation"/>
    <property type="evidence" value="ECO:0007669"/>
    <property type="project" value="InterPro"/>
</dbReference>
<dbReference type="CDD" id="cd03423">
    <property type="entry name" value="SirA"/>
    <property type="match status" value="1"/>
</dbReference>
<dbReference type="Gene3D" id="3.30.110.40">
    <property type="entry name" value="TusA-like domain"/>
    <property type="match status" value="1"/>
</dbReference>
<dbReference type="HAMAP" id="MF_00413">
    <property type="entry name" value="Thiourid_synth_A"/>
    <property type="match status" value="1"/>
</dbReference>
<dbReference type="InterPro" id="IPR022931">
    <property type="entry name" value="Sulphur_carrier_TusA"/>
</dbReference>
<dbReference type="InterPro" id="IPR001455">
    <property type="entry name" value="TusA-like"/>
</dbReference>
<dbReference type="InterPro" id="IPR036868">
    <property type="entry name" value="TusA-like_sf"/>
</dbReference>
<dbReference type="NCBIfam" id="NF001423">
    <property type="entry name" value="PRK00299.1"/>
    <property type="match status" value="1"/>
</dbReference>
<dbReference type="PANTHER" id="PTHR33279:SF2">
    <property type="entry name" value="SULFUR CARRIER PROTEIN TUSA"/>
    <property type="match status" value="1"/>
</dbReference>
<dbReference type="PANTHER" id="PTHR33279">
    <property type="entry name" value="SULFUR CARRIER PROTEIN YEDF-RELATED"/>
    <property type="match status" value="1"/>
</dbReference>
<dbReference type="Pfam" id="PF01206">
    <property type="entry name" value="TusA"/>
    <property type="match status" value="1"/>
</dbReference>
<dbReference type="SUPFAM" id="SSF64307">
    <property type="entry name" value="SirA-like"/>
    <property type="match status" value="1"/>
</dbReference>
<dbReference type="PROSITE" id="PS01148">
    <property type="entry name" value="UPF0033"/>
    <property type="match status" value="1"/>
</dbReference>
<proteinExistence type="inferred from homology"/>
<comment type="function">
    <text evidence="1">Sulfur carrier protein which probably makes part of a sulfur-relay system.</text>
</comment>
<comment type="subcellular location">
    <subcellularLocation>
        <location evidence="1">Cytoplasm</location>
    </subcellularLocation>
</comment>
<comment type="similarity">
    <text evidence="1">Belongs to the sulfur carrier protein TusA family.</text>
</comment>
<keyword id="KW-0963">Cytoplasm</keyword>
<sequence length="79" mass="8875">MTHPVDAILDATGLNCPEPVMMLHNKVRDLAPGGLLKVIATDPSTRRDIPKFCVFLGHELVEQQEEAGTYLYWIRKKAD</sequence>
<feature type="chain" id="PRO_1000050018" description="Sulfur carrier protein TusA">
    <location>
        <begin position="1"/>
        <end position="79"/>
    </location>
</feature>
<feature type="active site" description="Cysteine persulfide intermediate" evidence="1">
    <location>
        <position position="16"/>
    </location>
</feature>
<protein>
    <recommendedName>
        <fullName evidence="1">Sulfur carrier protein TusA</fullName>
    </recommendedName>
</protein>
<name>TUSA_PSEP7</name>
<organism>
    <name type="scientific">Pseudomonas paraeruginosa (strain DSM 24068 / PA7)</name>
    <name type="common">Pseudomonas aeruginosa (strain PA7)</name>
    <dbReference type="NCBI Taxonomy" id="381754"/>
    <lineage>
        <taxon>Bacteria</taxon>
        <taxon>Pseudomonadati</taxon>
        <taxon>Pseudomonadota</taxon>
        <taxon>Gammaproteobacteria</taxon>
        <taxon>Pseudomonadales</taxon>
        <taxon>Pseudomonadaceae</taxon>
        <taxon>Pseudomonas</taxon>
        <taxon>Pseudomonas paraeruginosa</taxon>
    </lineage>
</organism>
<reference key="1">
    <citation type="submission" date="2007-06" db="EMBL/GenBank/DDBJ databases">
        <authorList>
            <person name="Dodson R.J."/>
            <person name="Harkins D."/>
            <person name="Paulsen I.T."/>
        </authorList>
    </citation>
    <scope>NUCLEOTIDE SEQUENCE [LARGE SCALE GENOMIC DNA]</scope>
    <source>
        <strain>DSM 24068 / PA7</strain>
    </source>
</reference>